<sequence length="236" mass="26313">MDSEIVERLTKLGFVKTSHTHIAGEPLVIHAVAGAGKTTLLRSLLELPGVEVFTGGEHDPPNLSGKYIRCAAPPVAGAYNILDEYPAYPNWRSQPWNVLIADNLQYKEPTARAHYTCNRTHRLGQLTVDALRRVGFDITFAGTQTEDYGFQEGHLYTSQFYGQVISLDTQAHKIAVRHGLAPLSALETRGLEFDETTVITTKTSLEEVKDRHMVYVALTRHRRTCHLYTAHFAPSA</sequence>
<accession>P22169</accession>
<accession>B1NLP5</accession>
<reference key="1">
    <citation type="journal article" date="1991" name="J. Gen. Virol.">
        <title>The entire nucleotide sequence of foxtail mosaic virus RNA.</title>
        <authorList>
            <person name="Bancroft J.B."/>
            <person name="Rouleau M."/>
            <person name="Johnston R."/>
            <person name="Prins L."/>
            <person name="Mackie G.A."/>
        </authorList>
    </citation>
    <scope>NUCLEOTIDE SEQUENCE [GENOMIC RNA]</scope>
</reference>
<reference key="2">
    <citation type="journal article" date="2008" name="Arch. Virol.">
        <title>Revised sequence of foxtail mosaic virus reveals a triple gene block structure similar to potato virus X.</title>
        <authorList>
            <person name="Bruun-Rasmussen M."/>
            <person name="Madsen C.T."/>
            <person name="Johansen E."/>
            <person name="Albrechtsen M."/>
        </authorList>
    </citation>
    <scope>NUCLEOTIDE SEQUENCE [GENOMIC RNA]</scope>
</reference>
<reference key="3">
    <citation type="journal article" date="2005" name="Mol. Plant Microbe Interact.">
        <title>A new cell-to-cell transport model for Potexviruses.</title>
        <authorList>
            <person name="Verchot-Lubicz J."/>
        </authorList>
    </citation>
    <scope>REVIEW</scope>
</reference>
<gene>
    <name type="ORF">ORF2</name>
</gene>
<dbReference type="EMBL" id="M62730">
    <property type="protein sequence ID" value="AAA43827.1"/>
    <property type="molecule type" value="Genomic_RNA"/>
</dbReference>
<dbReference type="EMBL" id="EF630359">
    <property type="protein sequence ID" value="ABW25049.1"/>
    <property type="molecule type" value="Genomic_RNA"/>
</dbReference>
<dbReference type="PIR" id="JQ1259">
    <property type="entry name" value="JQ1259"/>
</dbReference>
<dbReference type="RefSeq" id="NP_040989.1">
    <property type="nucleotide sequence ID" value="NC_001483.1"/>
</dbReference>
<dbReference type="GeneID" id="1494010"/>
<dbReference type="KEGG" id="vg:1494010"/>
<dbReference type="OrthoDB" id="16070at10239"/>
<dbReference type="Proteomes" id="UP000008623">
    <property type="component" value="Genome"/>
</dbReference>
<dbReference type="GO" id="GO:0030430">
    <property type="term" value="C:host cell cytoplasm"/>
    <property type="evidence" value="ECO:0007669"/>
    <property type="project" value="UniProtKB-SubCell"/>
</dbReference>
<dbReference type="GO" id="GO:0005524">
    <property type="term" value="F:ATP binding"/>
    <property type="evidence" value="ECO:0007669"/>
    <property type="project" value="InterPro"/>
</dbReference>
<dbReference type="GO" id="GO:0003723">
    <property type="term" value="F:RNA binding"/>
    <property type="evidence" value="ECO:0007669"/>
    <property type="project" value="UniProtKB-KW"/>
</dbReference>
<dbReference type="GO" id="GO:0052170">
    <property type="term" value="P:symbiont-mediated suppression of host innate immune response"/>
    <property type="evidence" value="ECO:0007669"/>
    <property type="project" value="UniProtKB-KW"/>
</dbReference>
<dbReference type="GO" id="GO:0046740">
    <property type="term" value="P:transport of virus in host, cell to cell"/>
    <property type="evidence" value="ECO:0007669"/>
    <property type="project" value="UniProtKB-KW"/>
</dbReference>
<dbReference type="InterPro" id="IPR027351">
    <property type="entry name" value="(+)RNA_virus_helicase_core_dom"/>
</dbReference>
<dbReference type="InterPro" id="IPR027417">
    <property type="entry name" value="P-loop_NTPase"/>
</dbReference>
<dbReference type="Pfam" id="PF01443">
    <property type="entry name" value="Viral_helicase1"/>
    <property type="match status" value="1"/>
</dbReference>
<dbReference type="SUPFAM" id="SSF52540">
    <property type="entry name" value="P-loop containing nucleoside triphosphate hydrolases"/>
    <property type="match status" value="1"/>
</dbReference>
<dbReference type="PROSITE" id="PS51657">
    <property type="entry name" value="PSRV_HELICASE"/>
    <property type="match status" value="1"/>
</dbReference>
<protein>
    <recommendedName>
        <fullName>Movement and silencing protein TGBp1</fullName>
    </recommendedName>
    <alternativeName>
        <fullName>25 kDa protein</fullName>
    </alternativeName>
    <alternativeName>
        <fullName>Silencing suppressor P25</fullName>
    </alternativeName>
    <alternativeName>
        <fullName>Triple gene block 1 protein</fullName>
        <shortName>TGBp1</shortName>
    </alternativeName>
</protein>
<keyword id="KW-1035">Host cytoplasm</keyword>
<keyword id="KW-0945">Host-virus interaction</keyword>
<keyword id="KW-1090">Inhibition of host innate immune response by virus</keyword>
<keyword id="KW-1185">Reference proteome</keyword>
<keyword id="KW-0694">RNA-binding</keyword>
<keyword id="KW-0941">Suppressor of RNA silencing</keyword>
<keyword id="KW-0813">Transport</keyword>
<keyword id="KW-0899">Viral immunoevasion</keyword>
<keyword id="KW-0916">Viral movement protein</keyword>
<organismHost>
    <name type="scientific">Setaria italica</name>
    <name type="common">Foxtail millet</name>
    <name type="synonym">Panicum italicum</name>
    <dbReference type="NCBI Taxonomy" id="4555"/>
</organismHost>
<organismHost>
    <name type="scientific">Setaria viridis</name>
    <name type="common">Green bristlegrass</name>
    <name type="synonym">Setaria italica subsp. viridis</name>
    <dbReference type="NCBI Taxonomy" id="4556"/>
</organismHost>
<evidence type="ECO:0000250" key="1"/>
<evidence type="ECO:0000305" key="2"/>
<feature type="chain" id="PRO_0000222565" description="Movement and silencing protein TGBp1">
    <location>
        <begin position="1"/>
        <end position="236"/>
    </location>
</feature>
<feature type="domain" description="(+)RNA virus helicase ATP-binding">
    <location>
        <begin position="1"/>
        <end position="117"/>
    </location>
</feature>
<feature type="domain" description="(+)RNA virus helicase C-terminal">
    <location>
        <begin position="118"/>
        <end position="236"/>
    </location>
</feature>
<feature type="sequence conflict" description="In Ref. 1; AAA43827." evidence="2" ref="1">
    <original>A</original>
    <variation>R</variation>
    <location>
        <position position="111"/>
    </location>
</feature>
<organism>
    <name type="scientific">Foxtail mosaic virus</name>
    <dbReference type="NCBI Taxonomy" id="12179"/>
    <lineage>
        <taxon>Viruses</taxon>
        <taxon>Riboviria</taxon>
        <taxon>Orthornavirae</taxon>
        <taxon>Kitrinoviricota</taxon>
        <taxon>Alsuviricetes</taxon>
        <taxon>Tymovirales</taxon>
        <taxon>Alphaflexiviridae</taxon>
        <taxon>Potexvirus</taxon>
    </lineage>
</organism>
<comment type="function">
    <text evidence="1">Transports viral genome to neighboring plant cells directly through plasmosdesmata, without any budding. The movement protein allows efficient cell to cell propagation, by bypassing the host cell wall barrier. Increases plasmodesma size exclusion limit. Acts as a suppressor of RNA-mediated gene silencing, also known as post-transcriptional gene silencing (PTGS), a mechanism of plant viral defense that limits the accumulation of viral RNAs (By similarity).</text>
</comment>
<comment type="subunit">
    <text evidence="1">Homodimer and homooligomer. Interacts with capsid protein. Interacts with host AGO1; this interaction targets the host protein for degradation, thereby suppressing the antiviral RNA silencing (By similarity).</text>
</comment>
<comment type="subcellular location">
    <subcellularLocation>
        <location evidence="1">Host cytoplasm</location>
    </subcellularLocation>
</comment>
<comment type="miscellaneous">
    <text>TGBp1, TGBp2 and TGBp3 seem to act together for cell-to-cell propagation. TGBp1 is the main movement protein that physically cross the plasmodesma with the viral genome. TGBp2 and TGBp3 would facilitate TGBp1 function.</text>
</comment>
<comment type="similarity">
    <text evidence="2">Belongs to the Tymovirales TGBp1 protein family.</text>
</comment>
<name>TGB1_FXMV</name>
<proteinExistence type="inferred from homology"/>